<name>AF9_KLULA</name>
<organism>
    <name type="scientific">Kluyveromyces lactis (strain ATCC 8585 / CBS 2359 / DSM 70799 / NBRC 1267 / NRRL Y-1140 / WM37)</name>
    <name type="common">Yeast</name>
    <name type="synonym">Candida sphaerica</name>
    <dbReference type="NCBI Taxonomy" id="284590"/>
    <lineage>
        <taxon>Eukaryota</taxon>
        <taxon>Fungi</taxon>
        <taxon>Dikarya</taxon>
        <taxon>Ascomycota</taxon>
        <taxon>Saccharomycotina</taxon>
        <taxon>Saccharomycetes</taxon>
        <taxon>Saccharomycetales</taxon>
        <taxon>Saccharomycetaceae</taxon>
        <taxon>Kluyveromyces</taxon>
    </lineage>
</organism>
<evidence type="ECO:0000250" key="1"/>
<evidence type="ECO:0000255" key="2">
    <source>
        <dbReference type="PROSITE-ProRule" id="PRU00376"/>
    </source>
</evidence>
<evidence type="ECO:0000305" key="3"/>
<feature type="chain" id="PRO_0000215929" description="Protein AF-9 homolog">
    <location>
        <begin position="1"/>
        <end position="220"/>
    </location>
</feature>
<feature type="domain" description="YEATS" evidence="2">
    <location>
        <begin position="9"/>
        <end position="167"/>
    </location>
</feature>
<reference key="1">
    <citation type="journal article" date="2004" name="Nature">
        <title>Genome evolution in yeasts.</title>
        <authorList>
            <person name="Dujon B."/>
            <person name="Sherman D."/>
            <person name="Fischer G."/>
            <person name="Durrens P."/>
            <person name="Casaregola S."/>
            <person name="Lafontaine I."/>
            <person name="de Montigny J."/>
            <person name="Marck C."/>
            <person name="Neuveglise C."/>
            <person name="Talla E."/>
            <person name="Goffard N."/>
            <person name="Frangeul L."/>
            <person name="Aigle M."/>
            <person name="Anthouard V."/>
            <person name="Babour A."/>
            <person name="Barbe V."/>
            <person name="Barnay S."/>
            <person name="Blanchin S."/>
            <person name="Beckerich J.-M."/>
            <person name="Beyne E."/>
            <person name="Bleykasten C."/>
            <person name="Boisrame A."/>
            <person name="Boyer J."/>
            <person name="Cattolico L."/>
            <person name="Confanioleri F."/>
            <person name="de Daruvar A."/>
            <person name="Despons L."/>
            <person name="Fabre E."/>
            <person name="Fairhead C."/>
            <person name="Ferry-Dumazet H."/>
            <person name="Groppi A."/>
            <person name="Hantraye F."/>
            <person name="Hennequin C."/>
            <person name="Jauniaux N."/>
            <person name="Joyet P."/>
            <person name="Kachouri R."/>
            <person name="Kerrest A."/>
            <person name="Koszul R."/>
            <person name="Lemaire M."/>
            <person name="Lesur I."/>
            <person name="Ma L."/>
            <person name="Muller H."/>
            <person name="Nicaud J.-M."/>
            <person name="Nikolski M."/>
            <person name="Oztas S."/>
            <person name="Ozier-Kalogeropoulos O."/>
            <person name="Pellenz S."/>
            <person name="Potier S."/>
            <person name="Richard G.-F."/>
            <person name="Straub M.-L."/>
            <person name="Suleau A."/>
            <person name="Swennen D."/>
            <person name="Tekaia F."/>
            <person name="Wesolowski-Louvel M."/>
            <person name="Westhof E."/>
            <person name="Wirth B."/>
            <person name="Zeniou-Meyer M."/>
            <person name="Zivanovic Y."/>
            <person name="Bolotin-Fukuhara M."/>
            <person name="Thierry A."/>
            <person name="Bouchier C."/>
            <person name="Caudron B."/>
            <person name="Scarpelli C."/>
            <person name="Gaillardin C."/>
            <person name="Weissenbach J."/>
            <person name="Wincker P."/>
            <person name="Souciet J.-L."/>
        </authorList>
    </citation>
    <scope>NUCLEOTIDE SEQUENCE [LARGE SCALE GENOMIC DNA]</scope>
    <source>
        <strain>ATCC 8585 / CBS 2359 / DSM 70799 / NBRC 1267 / NRRL Y-1140 / WM37</strain>
    </source>
</reference>
<comment type="function">
    <text evidence="1">Component of the SWR1 complex which mediates the ATP-dependent exchange of histone H2A for the H2A variant HZT1 leading to transcriptional regulation of selected genes by chromatin remodeling. Component of the NuA4 histone acetyltransferase complex which is involved in transcriptional activation of selected genes principally by acetylation of nucleosomal histones H4 and H2A. The NuA4 complex is also involved in DNA repair. Yaf9 may also be required for viability in conditions in which the structural integrity of the spindle is compromised (By similarity).</text>
</comment>
<comment type="subunit">
    <text evidence="1">Component of the SWR1 chromatin-remodeling complex and of the NuA4 histone acetyltransferase complex.</text>
</comment>
<comment type="subcellular location">
    <subcellularLocation>
        <location evidence="1">Cytoplasm</location>
    </subcellularLocation>
    <subcellularLocation>
        <location evidence="2">Nucleus</location>
    </subcellularLocation>
</comment>
<comment type="similarity">
    <text evidence="3">Belongs to the YAF9 family.</text>
</comment>
<protein>
    <recommendedName>
        <fullName>Protein AF-9 homolog</fullName>
    </recommendedName>
</protein>
<gene>
    <name type="primary">YAF9</name>
    <name type="ordered locus">KLLA0F23584g</name>
</gene>
<sequence>MPAPPVTKRIKTLSVTRPIIYGNTAKKMGDNIPPNAPKDHTHLWTIFVRDPRGEDISYFIKKVVFKLHETYPNPVRVIEAPPFELTETGWGEFEINIKIYFADVSNEKMLNFYHHLRLHPYINPETKEIERSNDESEVPEDEVKAVYFDEIVFNEPVEQFFQLLMSKPGNLFPSNKTPTCVFSRQLEQEEIDRIHIGTKKIDKEIKVYEQKLKEAMDPNA</sequence>
<dbReference type="EMBL" id="CR382126">
    <property type="protein sequence ID" value="CAG98839.1"/>
    <property type="molecule type" value="Genomic_DNA"/>
</dbReference>
<dbReference type="RefSeq" id="XP_456131.1">
    <property type="nucleotide sequence ID" value="XM_456131.1"/>
</dbReference>
<dbReference type="SMR" id="Q6CIV8"/>
<dbReference type="FunCoup" id="Q6CIV8">
    <property type="interactions" value="770"/>
</dbReference>
<dbReference type="STRING" id="284590.Q6CIV8"/>
<dbReference type="PaxDb" id="284590-Q6CIV8"/>
<dbReference type="KEGG" id="kla:KLLA0_F23584g"/>
<dbReference type="eggNOG" id="KOG3149">
    <property type="taxonomic scope" value="Eukaryota"/>
</dbReference>
<dbReference type="HOGENOM" id="CLU_051385_2_1_1"/>
<dbReference type="InParanoid" id="Q6CIV8"/>
<dbReference type="OMA" id="VKPYHNE"/>
<dbReference type="Proteomes" id="UP000000598">
    <property type="component" value="Chromosome F"/>
</dbReference>
<dbReference type="GO" id="GO:0000785">
    <property type="term" value="C:chromatin"/>
    <property type="evidence" value="ECO:0007669"/>
    <property type="project" value="UniProtKB-ARBA"/>
</dbReference>
<dbReference type="GO" id="GO:0005737">
    <property type="term" value="C:cytoplasm"/>
    <property type="evidence" value="ECO:0007669"/>
    <property type="project" value="UniProtKB-SubCell"/>
</dbReference>
<dbReference type="GO" id="GO:0005634">
    <property type="term" value="C:nucleus"/>
    <property type="evidence" value="ECO:0007669"/>
    <property type="project" value="UniProtKB-SubCell"/>
</dbReference>
<dbReference type="GO" id="GO:0006325">
    <property type="term" value="P:chromatin organization"/>
    <property type="evidence" value="ECO:0007669"/>
    <property type="project" value="UniProtKB-KW"/>
</dbReference>
<dbReference type="GO" id="GO:0006281">
    <property type="term" value="P:DNA repair"/>
    <property type="evidence" value="ECO:0007669"/>
    <property type="project" value="UniProtKB-KW"/>
</dbReference>
<dbReference type="GO" id="GO:0006355">
    <property type="term" value="P:regulation of DNA-templated transcription"/>
    <property type="evidence" value="ECO:0007669"/>
    <property type="project" value="InterPro"/>
</dbReference>
<dbReference type="CDD" id="cd16908">
    <property type="entry name" value="YEATS_Yaf9_like"/>
    <property type="match status" value="1"/>
</dbReference>
<dbReference type="FunFam" id="2.60.40.1970:FF:000007">
    <property type="entry name" value="Protein AF-9 homolog"/>
    <property type="match status" value="1"/>
</dbReference>
<dbReference type="Gene3D" id="2.60.40.1970">
    <property type="entry name" value="YEATS domain"/>
    <property type="match status" value="1"/>
</dbReference>
<dbReference type="InterPro" id="IPR038704">
    <property type="entry name" value="YEAST_sf"/>
</dbReference>
<dbReference type="InterPro" id="IPR005033">
    <property type="entry name" value="YEATS"/>
</dbReference>
<dbReference type="InterPro" id="IPR055129">
    <property type="entry name" value="YEATS_dom"/>
</dbReference>
<dbReference type="PANTHER" id="PTHR47573">
    <property type="entry name" value="PROTEIN AF-9 HOMOLOG"/>
    <property type="match status" value="1"/>
</dbReference>
<dbReference type="PANTHER" id="PTHR47573:SF1">
    <property type="entry name" value="PROTEIN AF-9 HOMOLOG"/>
    <property type="match status" value="1"/>
</dbReference>
<dbReference type="Pfam" id="PF03366">
    <property type="entry name" value="YEATS"/>
    <property type="match status" value="1"/>
</dbReference>
<dbReference type="PROSITE" id="PS51037">
    <property type="entry name" value="YEATS"/>
    <property type="match status" value="1"/>
</dbReference>
<accession>Q6CIV8</accession>
<keyword id="KW-0010">Activator</keyword>
<keyword id="KW-0156">Chromatin regulator</keyword>
<keyword id="KW-0963">Cytoplasm</keyword>
<keyword id="KW-0227">DNA damage</keyword>
<keyword id="KW-0234">DNA repair</keyword>
<keyword id="KW-0539">Nucleus</keyword>
<keyword id="KW-1185">Reference proteome</keyword>
<keyword id="KW-0804">Transcription</keyword>
<keyword id="KW-0805">Transcription regulation</keyword>
<proteinExistence type="inferred from homology"/>